<gene>
    <name type="primary">Rnf182</name>
</gene>
<comment type="function">
    <text evidence="2">E3 ubiquitin-protein ligase that mediates the ubiquitination of ATP6V0C and targets it to degradation via the ubiquitin-proteasome pathway. Also plays a role in the inhibition of TLR-triggered innate immune response by mediating 'Lys'-48-linked ubiquitination and subsequent degradation of NF-kappa-B component RELA.</text>
</comment>
<comment type="catalytic activity">
    <reaction>
        <text>S-ubiquitinyl-[E2 ubiquitin-conjugating enzyme]-L-cysteine + [acceptor protein]-L-lysine = [E2 ubiquitin-conjugating enzyme]-L-cysteine + N(6)-ubiquitinyl-[acceptor protein]-L-lysine.</text>
        <dbReference type="EC" id="2.3.2.27"/>
    </reaction>
</comment>
<comment type="pathway">
    <text evidence="2">Protein modification; protein ubiquitination.</text>
</comment>
<comment type="subunit">
    <text evidence="2">Interacts with ATP6V0C.</text>
</comment>
<comment type="subcellular location">
    <subcellularLocation>
        <location evidence="2">Membrane</location>
        <topology evidence="2">Multi-pass membrane protein</topology>
    </subcellularLocation>
    <subcellularLocation>
        <location evidence="5">Cytoplasm</location>
    </subcellularLocation>
</comment>
<comment type="domain">
    <text evidence="1">The RING-type zinc finger domain is required for E3 ligase activity.</text>
</comment>
<comment type="disruption phenotype">
    <text evidence="5">Silencing prevents ventricular remodeling in rats after myocardial ischemia-reperfusion injury by activating the mTOR signaling pathway.</text>
</comment>
<feature type="chain" id="PRO_0000395671" description="E3 ubiquitin-protein ligase RNF182">
    <location>
        <begin position="1"/>
        <end position="247"/>
    </location>
</feature>
<feature type="transmembrane region" description="Helical" evidence="3">
    <location>
        <begin position="184"/>
        <end position="204"/>
    </location>
</feature>
<feature type="transmembrane region" description="Helical" evidence="3">
    <location>
        <begin position="211"/>
        <end position="231"/>
    </location>
</feature>
<feature type="zinc finger region" description="RING-type" evidence="4">
    <location>
        <begin position="20"/>
        <end position="68"/>
    </location>
</feature>
<reference key="1">
    <citation type="submission" date="2005-07" db="EMBL/GenBank/DDBJ databases">
        <authorList>
            <person name="Mural R.J."/>
            <person name="Adams M.D."/>
            <person name="Myers E.W."/>
            <person name="Smith H.O."/>
            <person name="Venter J.C."/>
        </authorList>
    </citation>
    <scope>NUCLEOTIDE SEQUENCE [LARGE SCALE GENOMIC DNA]</scope>
</reference>
<reference key="2">
    <citation type="journal article" date="2018" name="J. Cell. Biochem.">
        <title>Activation of the mammalian target of rapamycin signaling pathway underlies a novel inhibitory role of ring finger protein 182 in ventricular remodeling after myocardial ischemia-reperfusion injury.</title>
        <authorList>
            <person name="Wang J.H."/>
            <person name="Wei Z.F."/>
            <person name="Gao Y.L."/>
            <person name="Liu C.C."/>
            <person name="Sun J.H."/>
        </authorList>
    </citation>
    <scope>SUBCELLULAR LOCATION</scope>
    <scope>DISRUPTION PHENOTYPE</scope>
</reference>
<name>RN182_RAT</name>
<evidence type="ECO:0000250" key="1"/>
<evidence type="ECO:0000250" key="2">
    <source>
        <dbReference type="UniProtKB" id="Q8N6D2"/>
    </source>
</evidence>
<evidence type="ECO:0000255" key="3"/>
<evidence type="ECO:0000255" key="4">
    <source>
        <dbReference type="PROSITE-ProRule" id="PRU00175"/>
    </source>
</evidence>
<evidence type="ECO:0000269" key="5">
    <source>
    </source>
</evidence>
<evidence type="ECO:0000305" key="6"/>
<keyword id="KW-0963">Cytoplasm</keyword>
<keyword id="KW-0472">Membrane</keyword>
<keyword id="KW-0479">Metal-binding</keyword>
<keyword id="KW-1185">Reference proteome</keyword>
<keyword id="KW-0808">Transferase</keyword>
<keyword id="KW-0812">Transmembrane</keyword>
<keyword id="KW-1133">Transmembrane helix</keyword>
<keyword id="KW-0833">Ubl conjugation pathway</keyword>
<keyword id="KW-0862">Zinc</keyword>
<keyword id="KW-0863">Zinc-finger</keyword>
<proteinExistence type="inferred from homology"/>
<protein>
    <recommendedName>
        <fullName>E3 ubiquitin-protein ligase RNF182</fullName>
        <ecNumber evidence="2">2.3.2.27</ecNumber>
    </recommendedName>
    <alternativeName>
        <fullName>RING finger protein 182</fullName>
    </alternativeName>
    <alternativeName>
        <fullName evidence="6">RING-type E3 ubiquitin transferase RNF182</fullName>
    </alternativeName>
</protein>
<dbReference type="EC" id="2.3.2.27" evidence="2"/>
<dbReference type="EMBL" id="CH473977">
    <property type="protein sequence ID" value="EDL98193.1"/>
    <property type="molecule type" value="Genomic_DNA"/>
</dbReference>
<dbReference type="RefSeq" id="NP_001102587.1">
    <property type="nucleotide sequence ID" value="NM_001109117.3"/>
</dbReference>
<dbReference type="RefSeq" id="XP_017456133.1">
    <property type="nucleotide sequence ID" value="XM_017600644.3"/>
</dbReference>
<dbReference type="SMR" id="D3ZBM4"/>
<dbReference type="FunCoup" id="D3ZBM4">
    <property type="interactions" value="1282"/>
</dbReference>
<dbReference type="STRING" id="10116.ENSRNOP00000024323"/>
<dbReference type="PhosphoSitePlus" id="D3ZBM4"/>
<dbReference type="PaxDb" id="10116-ENSRNOP00000024323"/>
<dbReference type="Ensembl" id="ENSRNOT00000024323.4">
    <property type="protein sequence ID" value="ENSRNOP00000024323.2"/>
    <property type="gene ID" value="ENSRNOG00000018070.4"/>
</dbReference>
<dbReference type="Ensembl" id="ENSRNOT00000095392.1">
    <property type="protein sequence ID" value="ENSRNOP00000089379.1"/>
    <property type="gene ID" value="ENSRNOG00000018070.4"/>
</dbReference>
<dbReference type="Ensembl" id="ENSRNOT00000119567.1">
    <property type="protein sequence ID" value="ENSRNOP00000092002.1"/>
    <property type="gene ID" value="ENSRNOG00000018070.4"/>
</dbReference>
<dbReference type="GeneID" id="498726"/>
<dbReference type="KEGG" id="rno:498726"/>
<dbReference type="UCSC" id="RGD:1560399">
    <property type="organism name" value="rat"/>
</dbReference>
<dbReference type="AGR" id="RGD:1560399"/>
<dbReference type="CTD" id="221687"/>
<dbReference type="RGD" id="1560399">
    <property type="gene designation" value="Rnf182"/>
</dbReference>
<dbReference type="eggNOG" id="KOG2177">
    <property type="taxonomic scope" value="Eukaryota"/>
</dbReference>
<dbReference type="GeneTree" id="ENSGT00730000111020"/>
<dbReference type="HOGENOM" id="CLU_100624_0_0_1"/>
<dbReference type="InParanoid" id="D3ZBM4"/>
<dbReference type="OMA" id="SWTVWNC"/>
<dbReference type="OrthoDB" id="66556at9989"/>
<dbReference type="PhylomeDB" id="D3ZBM4"/>
<dbReference type="TreeFam" id="TF331690"/>
<dbReference type="Reactome" id="R-RNO-983168">
    <property type="pathway name" value="Antigen processing: Ubiquitination &amp; Proteasome degradation"/>
</dbReference>
<dbReference type="UniPathway" id="UPA00143"/>
<dbReference type="PRO" id="PR:D3ZBM4"/>
<dbReference type="Proteomes" id="UP000002494">
    <property type="component" value="Chromosome 17"/>
</dbReference>
<dbReference type="Proteomes" id="UP000234681">
    <property type="component" value="Chromosome 17"/>
</dbReference>
<dbReference type="Bgee" id="ENSRNOG00000018070">
    <property type="expression patterns" value="Expressed in cerebellum and 6 other cell types or tissues"/>
</dbReference>
<dbReference type="GO" id="GO:0005737">
    <property type="term" value="C:cytoplasm"/>
    <property type="evidence" value="ECO:0000266"/>
    <property type="project" value="RGD"/>
</dbReference>
<dbReference type="GO" id="GO:0016020">
    <property type="term" value="C:membrane"/>
    <property type="evidence" value="ECO:0007669"/>
    <property type="project" value="UniProtKB-SubCell"/>
</dbReference>
<dbReference type="GO" id="GO:0004842">
    <property type="term" value="F:ubiquitin-protein transferase activity"/>
    <property type="evidence" value="ECO:0000266"/>
    <property type="project" value="RGD"/>
</dbReference>
<dbReference type="GO" id="GO:0008270">
    <property type="term" value="F:zinc ion binding"/>
    <property type="evidence" value="ECO:0007669"/>
    <property type="project" value="UniProtKB-KW"/>
</dbReference>
<dbReference type="GO" id="GO:0016567">
    <property type="term" value="P:protein ubiquitination"/>
    <property type="evidence" value="ECO:0000250"/>
    <property type="project" value="UniProtKB"/>
</dbReference>
<dbReference type="CDD" id="cd16555">
    <property type="entry name" value="RING-HC_RNF182"/>
    <property type="match status" value="1"/>
</dbReference>
<dbReference type="FunFam" id="3.30.40.10:FF:000319">
    <property type="entry name" value="E3 ubiquitin-protein ligase RNF182"/>
    <property type="match status" value="1"/>
</dbReference>
<dbReference type="Gene3D" id="3.30.40.10">
    <property type="entry name" value="Zinc/RING finger domain, C3HC4 (zinc finger)"/>
    <property type="match status" value="1"/>
</dbReference>
<dbReference type="InterPro" id="IPR042285">
    <property type="entry name" value="RNF182"/>
</dbReference>
<dbReference type="InterPro" id="IPR047986">
    <property type="entry name" value="RNF182_RING-HC"/>
</dbReference>
<dbReference type="InterPro" id="IPR001841">
    <property type="entry name" value="Znf_RING"/>
</dbReference>
<dbReference type="InterPro" id="IPR013083">
    <property type="entry name" value="Znf_RING/FYVE/PHD"/>
</dbReference>
<dbReference type="InterPro" id="IPR017907">
    <property type="entry name" value="Znf_RING_CS"/>
</dbReference>
<dbReference type="PANTHER" id="PTHR46675">
    <property type="entry name" value="E3 UBIQUITIN-PROTEIN LIGASE RNF182"/>
    <property type="match status" value="1"/>
</dbReference>
<dbReference type="PANTHER" id="PTHR46675:SF2">
    <property type="entry name" value="E3 UBIQUITIN-PROTEIN LIGASE RNF182"/>
    <property type="match status" value="1"/>
</dbReference>
<dbReference type="SMART" id="SM00184">
    <property type="entry name" value="RING"/>
    <property type="match status" value="1"/>
</dbReference>
<dbReference type="SUPFAM" id="SSF57850">
    <property type="entry name" value="RING/U-box"/>
    <property type="match status" value="1"/>
</dbReference>
<dbReference type="PROSITE" id="PS00518">
    <property type="entry name" value="ZF_RING_1"/>
    <property type="match status" value="1"/>
</dbReference>
<dbReference type="PROSITE" id="PS50089">
    <property type="entry name" value="ZF_RING_2"/>
    <property type="match status" value="1"/>
</dbReference>
<sequence>MASQPPEEPAEFQVSDELECKICYNRYNLKQRKPKVLECCHRVCAKCLYKIIDFGDSPQGVIVCPFCRFETCLPDDEVSSLPDDNNILVNLTCGSKGKKCLPENPTELLLTPKRLASLVSPSHTSSNCLVITIMEVQRESSPSLSSTPVVEFYRPASFDSVTTVSHNWTVWNCTSLLFQTSIRVLVWLLGLLYFSSLPLGIYLLVSKKVTLGVVFVSLVPSSLVILMVYGFCQCVCHEFLDCMALPS</sequence>
<organism>
    <name type="scientific">Rattus norvegicus</name>
    <name type="common">Rat</name>
    <dbReference type="NCBI Taxonomy" id="10116"/>
    <lineage>
        <taxon>Eukaryota</taxon>
        <taxon>Metazoa</taxon>
        <taxon>Chordata</taxon>
        <taxon>Craniata</taxon>
        <taxon>Vertebrata</taxon>
        <taxon>Euteleostomi</taxon>
        <taxon>Mammalia</taxon>
        <taxon>Eutheria</taxon>
        <taxon>Euarchontoglires</taxon>
        <taxon>Glires</taxon>
        <taxon>Rodentia</taxon>
        <taxon>Myomorpha</taxon>
        <taxon>Muroidea</taxon>
        <taxon>Muridae</taxon>
        <taxon>Murinae</taxon>
        <taxon>Rattus</taxon>
    </lineage>
</organism>
<accession>D3ZBM4</accession>